<protein>
    <recommendedName>
        <fullName evidence="5">Secondary metabolism regulator laeA</fullName>
    </recommendedName>
    <alternativeName>
        <fullName evidence="6">Methyltransferase laeA</fullName>
        <ecNumber evidence="1">2.1.1.-</ecNumber>
    </alternativeName>
</protein>
<comment type="function">
    <text evidence="1 4">Methyltransferase that performs automethylation (By similarity). No other methyl-accepting substrate has been identified yet (By similarity). Acts as a global regulator for secondary metabolite gene expression (PubMed:31496254). Negatively regulates the production of coprinoferrin, a structurally novel acylated tripeptide hydroxamate siderophore (PubMed:31496254).</text>
</comment>
<comment type="catalytic activity">
    <reaction evidence="1">
        <text>L-methionyl-[protein] + S-adenosyl-L-methionine = S-methyl-L-methionyl-[protein] + S-adenosyl-L-homocysteine</text>
        <dbReference type="Rhea" id="RHEA:60560"/>
        <dbReference type="Rhea" id="RHEA-COMP:12313"/>
        <dbReference type="Rhea" id="RHEA-COMP:15592"/>
        <dbReference type="ChEBI" id="CHEBI:16044"/>
        <dbReference type="ChEBI" id="CHEBI:57856"/>
        <dbReference type="ChEBI" id="CHEBI:59789"/>
        <dbReference type="ChEBI" id="CHEBI:142742"/>
    </reaction>
    <physiologicalReaction direction="left-to-right" evidence="1">
        <dbReference type="Rhea" id="RHEA:60561"/>
    </physiologicalReaction>
</comment>
<comment type="subcellular location">
    <subcellularLocation>
        <location evidence="1">Nucleus</location>
    </subcellularLocation>
</comment>
<comment type="induction">
    <text evidence="3">Moderately expressed during the development but expression is induceded in the mycelium stage.</text>
</comment>
<comment type="disruption phenotype">
    <text evidence="4">Leads to the production of coprinoferrin.</text>
</comment>
<comment type="similarity">
    <text evidence="6">Belongs to the methyltransferase superfamily. LaeA methyltransferase family.</text>
</comment>
<proteinExistence type="evidence at transcript level"/>
<feature type="chain" id="PRO_0000452733" description="Secondary metabolism regulator laeA">
    <location>
        <begin position="1"/>
        <end position="402"/>
    </location>
</feature>
<feature type="region of interest" description="Disordered" evidence="2">
    <location>
        <begin position="1"/>
        <end position="70"/>
    </location>
</feature>
<feature type="compositionally biased region" description="Acidic residues" evidence="2">
    <location>
        <begin position="11"/>
        <end position="21"/>
    </location>
</feature>
<evidence type="ECO:0000250" key="1">
    <source>
        <dbReference type="UniProtKB" id="C8VQG9"/>
    </source>
</evidence>
<evidence type="ECO:0000256" key="2">
    <source>
        <dbReference type="SAM" id="MobiDB-lite"/>
    </source>
</evidence>
<evidence type="ECO:0000269" key="3">
    <source>
    </source>
</evidence>
<evidence type="ECO:0000269" key="4">
    <source>
    </source>
</evidence>
<evidence type="ECO:0000303" key="5">
    <source>
    </source>
</evidence>
<evidence type="ECO:0000305" key="6"/>
<gene>
    <name type="ORF">CC1G_00498</name>
</gene>
<keyword id="KW-0489">Methyltransferase</keyword>
<keyword id="KW-0539">Nucleus</keyword>
<keyword id="KW-1185">Reference proteome</keyword>
<keyword id="KW-0949">S-adenosyl-L-methionine</keyword>
<keyword id="KW-0749">Sporulation</keyword>
<keyword id="KW-0804">Transcription</keyword>
<keyword id="KW-0805">Transcription regulation</keyword>
<keyword id="KW-0808">Transferase</keyword>
<sequence length="402" mass="46935">MSLKYYLNDLSDSDSESESECAEGSSPQDEQNGFYDYRSPPDSADTSIFEDTGRSSSERPMSPTEVCSTDFEEKVPFSSELVVIPESMLKKREEYGRFFSNFKKAIYHLPADEEEWDRQERLHQSFIEMFGRKYPPELSEILKSDEYYEKRCLDLGCGTGCWIKEVARDFPYCEAVGVDLVVVPDTRDFPPNLRCEMDDVNLGLQHFFGRFDVVHARLLSSGIKDYQLLIENIARTLRPGGLVELQEYDFHIYDCNRRRFELSTNELAPPWWPRWMTFFNEAIRKMQGDVDAATHLLKWVRTHPGFEQVRYEERWIPIIPGNLDPLEPMYARLQADVSVYLRSGRPLLLKSGLSEMEVDILENNAIREFYESETTQYTRLQCVCARRNNAVLDHLPPSYNFR</sequence>
<accession>A8N374</accession>
<organism>
    <name type="scientific">Coprinopsis cinerea (strain Okayama-7 / 130 / ATCC MYA-4618 / FGSC 9003)</name>
    <name type="common">Inky cap fungus</name>
    <name type="synonym">Hormographiella aspergillata</name>
    <dbReference type="NCBI Taxonomy" id="240176"/>
    <lineage>
        <taxon>Eukaryota</taxon>
        <taxon>Fungi</taxon>
        <taxon>Dikarya</taxon>
        <taxon>Basidiomycota</taxon>
        <taxon>Agaricomycotina</taxon>
        <taxon>Agaricomycetes</taxon>
        <taxon>Agaricomycetidae</taxon>
        <taxon>Agaricales</taxon>
        <taxon>Agaricineae</taxon>
        <taxon>Psathyrellaceae</taxon>
        <taxon>Coprinopsis</taxon>
    </lineage>
</organism>
<name>LAEA_COPC7</name>
<reference key="1">
    <citation type="journal article" date="2010" name="Proc. Natl. Acad. Sci. U.S.A.">
        <title>Insights into evolution of multicellular fungi from the assembled chromosomes of the mushroom Coprinopsis cinerea (Coprinus cinereus).</title>
        <authorList>
            <person name="Stajich J.E."/>
            <person name="Wilke S.K."/>
            <person name="Ahren D."/>
            <person name="Au C.H."/>
            <person name="Birren B.W."/>
            <person name="Borodovsky M."/>
            <person name="Burns C."/>
            <person name="Canbaeck B."/>
            <person name="Casselton L.A."/>
            <person name="Cheng C.K."/>
            <person name="Deng J."/>
            <person name="Dietrich F.S."/>
            <person name="Fargo D.C."/>
            <person name="Farman M.L."/>
            <person name="Gathman A.C."/>
            <person name="Goldberg J."/>
            <person name="Guigo R."/>
            <person name="Hoegger P.J."/>
            <person name="Hooker J.B."/>
            <person name="Huggins A."/>
            <person name="James T.Y."/>
            <person name="Kamada T."/>
            <person name="Kilaru S."/>
            <person name="Kodira C."/>
            <person name="Kuees U."/>
            <person name="Kupfer D."/>
            <person name="Kwan H.S."/>
            <person name="Lomsadze A."/>
            <person name="Li W."/>
            <person name="Lilly W.W."/>
            <person name="Ma L.-J."/>
            <person name="Mackey A.J."/>
            <person name="Manning G."/>
            <person name="Martin F."/>
            <person name="Muraguchi H."/>
            <person name="Natvig D.O."/>
            <person name="Palmerini H."/>
            <person name="Ramesh M.A."/>
            <person name="Rehmeyer C.J."/>
            <person name="Roe B.A."/>
            <person name="Shenoy N."/>
            <person name="Stanke M."/>
            <person name="Ter-Hovhannisyan V."/>
            <person name="Tunlid A."/>
            <person name="Velagapudi R."/>
            <person name="Vision T.J."/>
            <person name="Zeng Q."/>
            <person name="Zolan M.E."/>
            <person name="Pukkila P.J."/>
        </authorList>
    </citation>
    <scope>NUCLEOTIDE SEQUENCE [LARGE SCALE GENOMIC DNA]</scope>
    <source>
        <strain>Okayama-7 / 130 / ATCC MYA-4618 / FGSC 9003</strain>
    </source>
</reference>
<reference key="2">
    <citation type="journal article" date="2015" name="PLoS ONE">
        <title>Strand-specific RNA-seq analyses of fruiting body development in Coprinopsis cinerea.</title>
        <authorList>
            <person name="Muraguchi H."/>
            <person name="Umezawa K."/>
            <person name="Niikura M."/>
            <person name="Yoshida M."/>
            <person name="Kozaki T."/>
            <person name="Ishii K."/>
            <person name="Sakai K."/>
            <person name="Shimizu M."/>
            <person name="Nakahori K."/>
            <person name="Sakamoto Y."/>
            <person name="Choi C."/>
            <person name="Ngan C.Y."/>
            <person name="Lindquist E."/>
            <person name="Lipzen A."/>
            <person name="Tritt A."/>
            <person name="Haridas S."/>
            <person name="Barry K."/>
            <person name="Grigoriev I.V."/>
            <person name="Pukkila P.J."/>
        </authorList>
    </citation>
    <scope>INDUCTION</scope>
</reference>
<reference key="3">
    <citation type="journal article" date="2019" name="Org. Lett.">
        <title>Genomic mushroom hunting decrypts coprinoferrin, a siderophore secondary metabolite vital to fungal cell development.</title>
        <authorList>
            <person name="Tsunematsu Y."/>
            <person name="Takanishi J."/>
            <person name="Asai S."/>
            <person name="Masuya T."/>
            <person name="Nakazawa T."/>
            <person name="Watanabe K."/>
        </authorList>
    </citation>
    <scope>FUNCTION</scope>
    <scope>DISRUPTION PHENOTYPE</scope>
</reference>
<dbReference type="EC" id="2.1.1.-" evidence="1"/>
<dbReference type="EMBL" id="AACS02000001">
    <property type="protein sequence ID" value="EAU92279.1"/>
    <property type="molecule type" value="Genomic_DNA"/>
</dbReference>
<dbReference type="RefSeq" id="XP_001829319.1">
    <property type="nucleotide sequence ID" value="XM_001829267.1"/>
</dbReference>
<dbReference type="STRING" id="240176.A8N374"/>
<dbReference type="GeneID" id="6005747"/>
<dbReference type="KEGG" id="cci:CC1G_00498"/>
<dbReference type="VEuPathDB" id="FungiDB:CC1G_00498"/>
<dbReference type="eggNOG" id="ENOG502S6PS">
    <property type="taxonomic scope" value="Eukaryota"/>
</dbReference>
<dbReference type="InParanoid" id="A8N374"/>
<dbReference type="OMA" id="WVEFQEP"/>
<dbReference type="OrthoDB" id="2013972at2759"/>
<dbReference type="Proteomes" id="UP000001861">
    <property type="component" value="Unassembled WGS sequence"/>
</dbReference>
<dbReference type="GO" id="GO:0005634">
    <property type="term" value="C:nucleus"/>
    <property type="evidence" value="ECO:0007669"/>
    <property type="project" value="UniProtKB-SubCell"/>
</dbReference>
<dbReference type="GO" id="GO:0008168">
    <property type="term" value="F:methyltransferase activity"/>
    <property type="evidence" value="ECO:0007669"/>
    <property type="project" value="UniProtKB-KW"/>
</dbReference>
<dbReference type="GO" id="GO:0032259">
    <property type="term" value="P:methylation"/>
    <property type="evidence" value="ECO:0007669"/>
    <property type="project" value="UniProtKB-KW"/>
</dbReference>
<dbReference type="GO" id="GO:0030435">
    <property type="term" value="P:sporulation resulting in formation of a cellular spore"/>
    <property type="evidence" value="ECO:0007669"/>
    <property type="project" value="UniProtKB-KW"/>
</dbReference>
<dbReference type="CDD" id="cd02440">
    <property type="entry name" value="AdoMet_MTases"/>
    <property type="match status" value="1"/>
</dbReference>
<dbReference type="Gene3D" id="3.40.50.150">
    <property type="entry name" value="Vaccinia Virus protein VP39"/>
    <property type="match status" value="1"/>
</dbReference>
<dbReference type="InterPro" id="IPR029063">
    <property type="entry name" value="SAM-dependent_MTases_sf"/>
</dbReference>
<dbReference type="PANTHER" id="PTHR43591">
    <property type="entry name" value="METHYLTRANSFERASE"/>
    <property type="match status" value="1"/>
</dbReference>
<dbReference type="Pfam" id="PF13489">
    <property type="entry name" value="Methyltransf_23"/>
    <property type="match status" value="1"/>
</dbReference>
<dbReference type="SUPFAM" id="SSF53335">
    <property type="entry name" value="S-adenosyl-L-methionine-dependent methyltransferases"/>
    <property type="match status" value="1"/>
</dbReference>